<accession>Q8EPJ4</accession>
<name>MURI_OCEIH</name>
<proteinExistence type="inferred from homology"/>
<reference key="1">
    <citation type="journal article" date="2002" name="Nucleic Acids Res.">
        <title>Genome sequence of Oceanobacillus iheyensis isolated from the Iheya Ridge and its unexpected adaptive capabilities to extreme environments.</title>
        <authorList>
            <person name="Takami H."/>
            <person name="Takaki Y."/>
            <person name="Uchiyama I."/>
        </authorList>
    </citation>
    <scope>NUCLEOTIDE SEQUENCE [LARGE SCALE GENOMIC DNA]</scope>
    <source>
        <strain>DSM 14371 / CIP 107618 / JCM 11309 / KCTC 3954 / HTE831</strain>
    </source>
</reference>
<evidence type="ECO:0000255" key="1">
    <source>
        <dbReference type="HAMAP-Rule" id="MF_00258"/>
    </source>
</evidence>
<comment type="function">
    <text evidence="1">Provides the (R)-glutamate required for cell wall biosynthesis.</text>
</comment>
<comment type="catalytic activity">
    <reaction evidence="1">
        <text>L-glutamate = D-glutamate</text>
        <dbReference type="Rhea" id="RHEA:12813"/>
        <dbReference type="ChEBI" id="CHEBI:29985"/>
        <dbReference type="ChEBI" id="CHEBI:29986"/>
        <dbReference type="EC" id="5.1.1.3"/>
    </reaction>
</comment>
<comment type="pathway">
    <text evidence="1">Cell wall biogenesis; peptidoglycan biosynthesis.</text>
</comment>
<comment type="similarity">
    <text evidence="1">Belongs to the aspartate/glutamate racemases family.</text>
</comment>
<organism>
    <name type="scientific">Oceanobacillus iheyensis (strain DSM 14371 / CIP 107618 / JCM 11309 / KCTC 3954 / HTE831)</name>
    <dbReference type="NCBI Taxonomy" id="221109"/>
    <lineage>
        <taxon>Bacteria</taxon>
        <taxon>Bacillati</taxon>
        <taxon>Bacillota</taxon>
        <taxon>Bacilli</taxon>
        <taxon>Bacillales</taxon>
        <taxon>Bacillaceae</taxon>
        <taxon>Oceanobacillus</taxon>
    </lineage>
</organism>
<dbReference type="EC" id="5.1.1.3" evidence="1"/>
<dbReference type="EMBL" id="BA000028">
    <property type="protein sequence ID" value="BAC14064.1"/>
    <property type="molecule type" value="Genomic_DNA"/>
</dbReference>
<dbReference type="RefSeq" id="WP_011066503.1">
    <property type="nucleotide sequence ID" value="NC_004193.1"/>
</dbReference>
<dbReference type="SMR" id="Q8EPJ4"/>
<dbReference type="STRING" id="221109.gene:10734356"/>
<dbReference type="KEGG" id="oih:OB2108"/>
<dbReference type="eggNOG" id="COG0796">
    <property type="taxonomic scope" value="Bacteria"/>
</dbReference>
<dbReference type="HOGENOM" id="CLU_052344_0_2_9"/>
<dbReference type="OrthoDB" id="9801055at2"/>
<dbReference type="PhylomeDB" id="Q8EPJ4"/>
<dbReference type="UniPathway" id="UPA00219"/>
<dbReference type="Proteomes" id="UP000000822">
    <property type="component" value="Chromosome"/>
</dbReference>
<dbReference type="GO" id="GO:0008881">
    <property type="term" value="F:glutamate racemase activity"/>
    <property type="evidence" value="ECO:0007669"/>
    <property type="project" value="UniProtKB-UniRule"/>
</dbReference>
<dbReference type="GO" id="GO:0071555">
    <property type="term" value="P:cell wall organization"/>
    <property type="evidence" value="ECO:0007669"/>
    <property type="project" value="UniProtKB-KW"/>
</dbReference>
<dbReference type="GO" id="GO:0009252">
    <property type="term" value="P:peptidoglycan biosynthetic process"/>
    <property type="evidence" value="ECO:0007669"/>
    <property type="project" value="UniProtKB-UniRule"/>
</dbReference>
<dbReference type="GO" id="GO:0008360">
    <property type="term" value="P:regulation of cell shape"/>
    <property type="evidence" value="ECO:0007669"/>
    <property type="project" value="UniProtKB-KW"/>
</dbReference>
<dbReference type="FunFam" id="3.40.50.1860:FF:000002">
    <property type="entry name" value="Glutamate racemase"/>
    <property type="match status" value="1"/>
</dbReference>
<dbReference type="Gene3D" id="3.40.50.1860">
    <property type="match status" value="2"/>
</dbReference>
<dbReference type="HAMAP" id="MF_00258">
    <property type="entry name" value="Glu_racemase"/>
    <property type="match status" value="1"/>
</dbReference>
<dbReference type="InterPro" id="IPR015942">
    <property type="entry name" value="Asp/Glu/hydantoin_racemase"/>
</dbReference>
<dbReference type="InterPro" id="IPR001920">
    <property type="entry name" value="Asp/Glu_race"/>
</dbReference>
<dbReference type="InterPro" id="IPR018187">
    <property type="entry name" value="Asp/Glu_racemase_AS_1"/>
</dbReference>
<dbReference type="InterPro" id="IPR033134">
    <property type="entry name" value="Asp/Glu_racemase_AS_2"/>
</dbReference>
<dbReference type="InterPro" id="IPR004391">
    <property type="entry name" value="Glu_race"/>
</dbReference>
<dbReference type="NCBIfam" id="TIGR00067">
    <property type="entry name" value="glut_race"/>
    <property type="match status" value="1"/>
</dbReference>
<dbReference type="NCBIfam" id="NF002035">
    <property type="entry name" value="PRK00865.1-3"/>
    <property type="match status" value="1"/>
</dbReference>
<dbReference type="PANTHER" id="PTHR21198">
    <property type="entry name" value="GLUTAMATE RACEMASE"/>
    <property type="match status" value="1"/>
</dbReference>
<dbReference type="PANTHER" id="PTHR21198:SF2">
    <property type="entry name" value="GLUTAMATE RACEMASE"/>
    <property type="match status" value="1"/>
</dbReference>
<dbReference type="Pfam" id="PF01177">
    <property type="entry name" value="Asp_Glu_race"/>
    <property type="match status" value="1"/>
</dbReference>
<dbReference type="SUPFAM" id="SSF53681">
    <property type="entry name" value="Aspartate/glutamate racemase"/>
    <property type="match status" value="2"/>
</dbReference>
<dbReference type="PROSITE" id="PS00923">
    <property type="entry name" value="ASP_GLU_RACEMASE_1"/>
    <property type="match status" value="1"/>
</dbReference>
<dbReference type="PROSITE" id="PS00924">
    <property type="entry name" value="ASP_GLU_RACEMASE_2"/>
    <property type="match status" value="1"/>
</dbReference>
<gene>
    <name evidence="1" type="primary">murI</name>
    <name type="ordered locus">OB2108</name>
</gene>
<feature type="chain" id="PRO_0000095494" description="Glutamate racemase">
    <location>
        <begin position="1"/>
        <end position="274"/>
    </location>
</feature>
<feature type="active site" description="Proton donor/acceptor" evidence="1">
    <location>
        <position position="72"/>
    </location>
</feature>
<feature type="active site" description="Proton donor/acceptor" evidence="1">
    <location>
        <position position="184"/>
    </location>
</feature>
<feature type="binding site" evidence="1">
    <location>
        <begin position="9"/>
        <end position="10"/>
    </location>
    <ligand>
        <name>substrate</name>
    </ligand>
</feature>
<feature type="binding site" evidence="1">
    <location>
        <begin position="41"/>
        <end position="42"/>
    </location>
    <ligand>
        <name>substrate</name>
    </ligand>
</feature>
<feature type="binding site" evidence="1">
    <location>
        <begin position="73"/>
        <end position="74"/>
    </location>
    <ligand>
        <name>substrate</name>
    </ligand>
</feature>
<feature type="binding site" evidence="1">
    <location>
        <begin position="185"/>
        <end position="186"/>
    </location>
    <ligand>
        <name>substrate</name>
    </ligand>
</feature>
<protein>
    <recommendedName>
        <fullName evidence="1">Glutamate racemase</fullName>
        <ecNumber evidence="1">5.1.1.3</ecNumber>
    </recommendedName>
</protein>
<keyword id="KW-0133">Cell shape</keyword>
<keyword id="KW-0961">Cell wall biogenesis/degradation</keyword>
<keyword id="KW-0413">Isomerase</keyword>
<keyword id="KW-0573">Peptidoglycan synthesis</keyword>
<keyword id="KW-1185">Reference proteome</keyword>
<sequence length="274" mass="30159">MDKSIGVIDSGVGGLTVVHELMRQLPKEQLIYLGDTARCPYGPRSKEEVRQFTWEMVDFLLTKNIKMLVVACNTATAFTLKDLKEQLDIPVIGVIQPGARAAIKSTTNNQVGVIGTEGTISSGAYSQALEKIKSDIQVSGLACPPFVPMVERGVLSGPEAKAVVSEALRPFSNNKEMDTLILGCTHYPLLKSTIQEVMGEEVTVISSSEETARETSTLLDVHQIMNRSDLVPLHQFYTTGDLEIFIEIAKTIFQESHFQMLTIKQANISTNKVW</sequence>